<gene>
    <name type="primary">yqjA</name>
    <name type="ordered locus">b3095</name>
    <name type="ordered locus">JW3066</name>
</gene>
<sequence length="220" mass="24585">MELLTQLLQALWAQDFETLANPSMIGMLYFVLFVILFLENGLLPAAFLPGDSLLVLVGVLIAKGAMGYPQTILLLTVAASLGCWVSYIQGRWLGNTRTVQNWLSHLPAHYHQRAHHLFHKHGLSALLIGRFIAFVRTLLPTIAGLSGLNNARFQFFNWMSGLLWVLILTTLGYMLGKTPVFLKYEDQLMSCLMLLPVVLLVFGLAGSLVVLWKKKYGNRG</sequence>
<dbReference type="EMBL" id="U18997">
    <property type="protein sequence ID" value="AAA57899.1"/>
    <property type="molecule type" value="Genomic_DNA"/>
</dbReference>
<dbReference type="EMBL" id="U00096">
    <property type="protein sequence ID" value="AAC76130.1"/>
    <property type="molecule type" value="Genomic_DNA"/>
</dbReference>
<dbReference type="EMBL" id="AP009048">
    <property type="protein sequence ID" value="BAE77145.1"/>
    <property type="molecule type" value="Genomic_DNA"/>
</dbReference>
<dbReference type="EMBL" id="D13328">
    <property type="status" value="NOT_ANNOTATED_CDS"/>
    <property type="molecule type" value="Genomic_DNA"/>
</dbReference>
<dbReference type="PIR" id="D65098">
    <property type="entry name" value="D65098"/>
</dbReference>
<dbReference type="RefSeq" id="NP_417566.1">
    <property type="nucleotide sequence ID" value="NC_000913.3"/>
</dbReference>
<dbReference type="RefSeq" id="WP_000422149.1">
    <property type="nucleotide sequence ID" value="NZ_STEB01000001.1"/>
</dbReference>
<dbReference type="BioGRID" id="4262411">
    <property type="interactions" value="70"/>
</dbReference>
<dbReference type="FunCoup" id="P0AA63">
    <property type="interactions" value="128"/>
</dbReference>
<dbReference type="STRING" id="511145.b3095"/>
<dbReference type="TCDB" id="9.B.27.2.2">
    <property type="family name" value="the death effector domain a (deda) family"/>
</dbReference>
<dbReference type="PaxDb" id="511145-b3095"/>
<dbReference type="EnsemblBacteria" id="AAC76130">
    <property type="protein sequence ID" value="AAC76130"/>
    <property type="gene ID" value="b3095"/>
</dbReference>
<dbReference type="GeneID" id="86947970"/>
<dbReference type="GeneID" id="947643"/>
<dbReference type="KEGG" id="ecj:JW3066"/>
<dbReference type="KEGG" id="eco:b3095"/>
<dbReference type="KEGG" id="ecoc:C3026_16900"/>
<dbReference type="PATRIC" id="fig|1411691.4.peg.3633"/>
<dbReference type="EchoBASE" id="EB2596"/>
<dbReference type="eggNOG" id="COG0586">
    <property type="taxonomic scope" value="Bacteria"/>
</dbReference>
<dbReference type="HOGENOM" id="CLU_044208_6_2_6"/>
<dbReference type="InParanoid" id="P0AA63"/>
<dbReference type="OMA" id="MPLGGFY"/>
<dbReference type="OrthoDB" id="13976at2"/>
<dbReference type="PhylomeDB" id="P0AA63"/>
<dbReference type="BioCyc" id="EcoCyc:G7609-MONOMER"/>
<dbReference type="PRO" id="PR:P0AA63"/>
<dbReference type="Proteomes" id="UP000000625">
    <property type="component" value="Chromosome"/>
</dbReference>
<dbReference type="GO" id="GO:0005886">
    <property type="term" value="C:plasma membrane"/>
    <property type="evidence" value="ECO:0000314"/>
    <property type="project" value="EcoCyc"/>
</dbReference>
<dbReference type="GO" id="GO:0022857">
    <property type="term" value="F:transmembrane transporter activity"/>
    <property type="evidence" value="ECO:0000315"/>
    <property type="project" value="EcoCyc"/>
</dbReference>
<dbReference type="GO" id="GO:0043093">
    <property type="term" value="P:FtsZ-dependent cytokinesis"/>
    <property type="evidence" value="ECO:0000316"/>
    <property type="project" value="EcoCyc"/>
</dbReference>
<dbReference type="GO" id="GO:0009410">
    <property type="term" value="P:response to xenobiotic stimulus"/>
    <property type="evidence" value="ECO:0000269"/>
    <property type="project" value="EcoCyc"/>
</dbReference>
<dbReference type="GO" id="GO:0055085">
    <property type="term" value="P:transmembrane transport"/>
    <property type="evidence" value="ECO:0000315"/>
    <property type="project" value="EcoCyc"/>
</dbReference>
<dbReference type="InterPro" id="IPR032818">
    <property type="entry name" value="DedA-like"/>
</dbReference>
<dbReference type="InterPro" id="IPR032816">
    <property type="entry name" value="VTT_dom"/>
</dbReference>
<dbReference type="PANTHER" id="PTHR30353">
    <property type="entry name" value="INNER MEMBRANE PROTEIN DEDA-RELATED"/>
    <property type="match status" value="1"/>
</dbReference>
<dbReference type="PANTHER" id="PTHR30353:SF11">
    <property type="entry name" value="INNER MEMBRANE PROTEIN YQJA"/>
    <property type="match status" value="1"/>
</dbReference>
<dbReference type="Pfam" id="PF09335">
    <property type="entry name" value="VTT_dom"/>
    <property type="match status" value="1"/>
</dbReference>
<protein>
    <recommendedName>
        <fullName>Inner membrane protein YqjA</fullName>
    </recommendedName>
</protein>
<organism>
    <name type="scientific">Escherichia coli (strain K12)</name>
    <dbReference type="NCBI Taxonomy" id="83333"/>
    <lineage>
        <taxon>Bacteria</taxon>
        <taxon>Pseudomonadati</taxon>
        <taxon>Pseudomonadota</taxon>
        <taxon>Gammaproteobacteria</taxon>
        <taxon>Enterobacterales</taxon>
        <taxon>Enterobacteriaceae</taxon>
        <taxon>Escherichia</taxon>
    </lineage>
</organism>
<keyword id="KW-0997">Cell inner membrane</keyword>
<keyword id="KW-1003">Cell membrane</keyword>
<keyword id="KW-0472">Membrane</keyword>
<keyword id="KW-1185">Reference proteome</keyword>
<keyword id="KW-0812">Transmembrane</keyword>
<keyword id="KW-1133">Transmembrane helix</keyword>
<evidence type="ECO:0000255" key="1"/>
<evidence type="ECO:0000269" key="2">
    <source>
    </source>
</evidence>
<evidence type="ECO:0000269" key="3">
    <source>
    </source>
</evidence>
<evidence type="ECO:0000269" key="4">
    <source>
    </source>
</evidence>
<evidence type="ECO:0000269" key="5">
    <source>
    </source>
</evidence>
<evidence type="ECO:0000305" key="6"/>
<comment type="function">
    <text evidence="3 4 5">May be a membrane transporter required for proton motive force (PMF)-dependent drug efflux. Required, with YghB, for the proper export of certain periplasmic amidases and, possibly, other Tat substrates. May play a role in determining membrane lipid composition.</text>
</comment>
<comment type="subcellular location">
    <subcellularLocation>
        <location>Cell inner membrane</location>
        <topology>Multi-pass membrane protein</topology>
    </subcellularLocation>
</comment>
<comment type="induction">
    <text evidence="2">Regulated by the CpxA/CpxR two-component system.</text>
</comment>
<comment type="disruption phenotype">
    <text evidence="3 4 5">Double mutants lacking both yghB and yqjA show incomplete cell division, temperature sensitivity and altered phospholipid levels. They are also hypersensitive to several compounds known to be exported by other drug efflux proteins, including ethidium bromide, methyl viologen, acriflavine and beta-lactam antibiotics. Expression of either yghB or yqjA can restore the wild-type phenotype, suggesting that these proteins have redundant functions. Both individual null mutant strains grow normally at all temperatures.</text>
</comment>
<comment type="similarity">
    <text evidence="6">Belongs to the DedA family.</text>
</comment>
<accession>P0AA63</accession>
<accession>P42614</accession>
<accession>Q2M9B1</accession>
<proteinExistence type="evidence at protein level"/>
<reference key="1">
    <citation type="journal article" date="1997" name="Science">
        <title>The complete genome sequence of Escherichia coli K-12.</title>
        <authorList>
            <person name="Blattner F.R."/>
            <person name="Plunkett G. III"/>
            <person name="Bloch C.A."/>
            <person name="Perna N.T."/>
            <person name="Burland V."/>
            <person name="Riley M."/>
            <person name="Collado-Vides J."/>
            <person name="Glasner J.D."/>
            <person name="Rode C.K."/>
            <person name="Mayhew G.F."/>
            <person name="Gregor J."/>
            <person name="Davis N.W."/>
            <person name="Kirkpatrick H.A."/>
            <person name="Goeden M.A."/>
            <person name="Rose D.J."/>
            <person name="Mau B."/>
            <person name="Shao Y."/>
        </authorList>
    </citation>
    <scope>NUCLEOTIDE SEQUENCE [LARGE SCALE GENOMIC DNA]</scope>
    <source>
        <strain>K12 / MG1655 / ATCC 47076</strain>
    </source>
</reference>
<reference key="2">
    <citation type="journal article" date="2006" name="Mol. Syst. Biol.">
        <title>Highly accurate genome sequences of Escherichia coli K-12 strains MG1655 and W3110.</title>
        <authorList>
            <person name="Hayashi K."/>
            <person name="Morooka N."/>
            <person name="Yamamoto Y."/>
            <person name="Fujita K."/>
            <person name="Isono K."/>
            <person name="Choi S."/>
            <person name="Ohtsubo E."/>
            <person name="Baba T."/>
            <person name="Wanner B.L."/>
            <person name="Mori H."/>
            <person name="Horiuchi T."/>
        </authorList>
    </citation>
    <scope>NUCLEOTIDE SEQUENCE [LARGE SCALE GENOMIC DNA]</scope>
    <source>
        <strain>K12 / W3110 / ATCC 27325 / DSM 5911</strain>
    </source>
</reference>
<reference key="3">
    <citation type="submission" date="1992-09" db="EMBL/GenBank/DDBJ databases">
        <authorList>
            <person name="Mizobuchi K."/>
        </authorList>
    </citation>
    <scope>NUCLEOTIDE SEQUENCE [GENOMIC DNA] OF 1-188</scope>
    <source>
        <strain>K12 / W3110 / ATCC 27325 / DSM 5911</strain>
    </source>
</reference>
<reference key="4">
    <citation type="journal article" date="2005" name="Science">
        <title>Global topology analysis of the Escherichia coli inner membrane proteome.</title>
        <authorList>
            <person name="Daley D.O."/>
            <person name="Rapp M."/>
            <person name="Granseth E."/>
            <person name="Melen K."/>
            <person name="Drew D."/>
            <person name="von Heijne G."/>
        </authorList>
    </citation>
    <scope>TOPOLOGY [LARGE SCALE ANALYSIS]</scope>
    <source>
        <strain>K12 / MG1655 / ATCC 47076</strain>
    </source>
</reference>
<reference key="5">
    <citation type="journal article" date="2006" name="Biosci. Biotechnol. Biochem.">
        <title>Characterization of copper-inducible promoters regulated by CpxA/CpxR in Escherichia coli.</title>
        <authorList>
            <person name="Yamamoto K."/>
            <person name="Ishihama A."/>
        </authorList>
    </citation>
    <scope>INDUCTION</scope>
    <source>
        <strain>K12</strain>
    </source>
</reference>
<reference key="6">
    <citation type="journal article" date="2008" name="J. Bacteriol.">
        <title>Temperature sensitivity and cell division defects in an Escherichia coli strain with mutations in yghB and yqjA, encoding related and conserved inner membrane proteins.</title>
        <authorList>
            <person name="Thompkins K."/>
            <person name="Chattopadhyay B."/>
            <person name="Xiao Y."/>
            <person name="Henk M.C."/>
            <person name="Doerrler W.T."/>
        </authorList>
    </citation>
    <scope>FUNCTION</scope>
    <scope>DISRUPTION PHENOTYPE</scope>
    <source>
        <strain>K12 / W3110 / ATCC 27325 / DSM 5911</strain>
    </source>
</reference>
<reference key="7">
    <citation type="journal article" date="2010" name="J. Bacteriol.">
        <title>Inefficient Tat-dependent export of periplasmic amidases in an Escherichia coli strain with mutations in two DedA family genes.</title>
        <authorList>
            <person name="Sikdar R."/>
            <person name="Doerrler W.T."/>
        </authorList>
    </citation>
    <scope>FUNCTION</scope>
    <scope>DISRUPTION PHENOTYPE</scope>
    <source>
        <strain>K12 / W3110 / ATCC 27325 / DSM 5911</strain>
    </source>
</reference>
<reference key="8">
    <citation type="journal article" date="2014" name="Antimicrob. Agents Chemother.">
        <title>Members of the conserved DedA family are likely membrane transporters and are required for drug resistance in Escherichia coli.</title>
        <authorList>
            <person name="Kumar S."/>
            <person name="Doerrler W.T."/>
        </authorList>
    </citation>
    <scope>FUNCTION</scope>
    <scope>DISRUPTION PHENOTYPE</scope>
    <scope>MUTAGENESIS OF GLU-39 AND ASP-51</scope>
    <source>
        <strain>K12 / W3110 / ATCC 27325 / DSM 5911</strain>
    </source>
</reference>
<name>YQJA_ECOLI</name>
<feature type="chain" id="PRO_0000161417" description="Inner membrane protein YqjA">
    <location>
        <begin position="1"/>
        <end position="220"/>
    </location>
</feature>
<feature type="topological domain" description="Periplasmic" evidence="1">
    <location>
        <begin position="1"/>
        <end position="27"/>
    </location>
</feature>
<feature type="transmembrane region" description="Helical" evidence="1">
    <location>
        <begin position="28"/>
        <end position="48"/>
    </location>
</feature>
<feature type="topological domain" description="Cytoplasmic" evidence="1">
    <location>
        <begin position="49"/>
        <end position="52"/>
    </location>
</feature>
<feature type="transmembrane region" description="Helical" evidence="1">
    <location>
        <begin position="53"/>
        <end position="73"/>
    </location>
</feature>
<feature type="transmembrane region" description="Helical" evidence="1">
    <location>
        <begin position="74"/>
        <end position="94"/>
    </location>
</feature>
<feature type="topological domain" description="Cytoplasmic" evidence="1">
    <location>
        <begin position="95"/>
        <end position="154"/>
    </location>
</feature>
<feature type="transmembrane region" description="Helical" evidence="1">
    <location>
        <begin position="155"/>
        <end position="175"/>
    </location>
</feature>
<feature type="topological domain" description="Periplasmic" evidence="1">
    <location>
        <begin position="176"/>
        <end position="191"/>
    </location>
</feature>
<feature type="transmembrane region" description="Helical" evidence="1">
    <location>
        <begin position="192"/>
        <end position="212"/>
    </location>
</feature>
<feature type="topological domain" description="Cytoplasmic" evidence="1">
    <location>
        <begin position="213"/>
        <end position="220"/>
    </location>
</feature>
<feature type="mutagenesis site" description="Abolishes the ability to restore growth, cell division or drug resistance in double mutant." evidence="5">
    <original>E</original>
    <variation>A</variation>
    <variation>Q</variation>
    <location>
        <position position="39"/>
    </location>
</feature>
<feature type="mutagenesis site" description="Abolishes the ability to restore growth, cell division or drug resistance in double mutant." evidence="5">
    <original>D</original>
    <variation>A</variation>
    <variation>N</variation>
    <location>
        <position position="51"/>
    </location>
</feature>